<name>GRAM_RAT</name>
<evidence type="ECO:0000250" key="1"/>
<evidence type="ECO:0000255" key="2"/>
<evidence type="ECO:0000255" key="3">
    <source>
        <dbReference type="PROSITE-ProRule" id="PRU00274"/>
    </source>
</evidence>
<evidence type="ECO:0000256" key="4">
    <source>
        <dbReference type="SAM" id="MobiDB-lite"/>
    </source>
</evidence>
<evidence type="ECO:0000269" key="5">
    <source>
    </source>
</evidence>
<gene>
    <name type="primary">Gzmm</name>
</gene>
<dbReference type="EC" id="3.4.21.-"/>
<dbReference type="EMBL" id="L05175">
    <property type="protein sequence ID" value="AAA42056.1"/>
    <property type="molecule type" value="mRNA"/>
</dbReference>
<dbReference type="PIR" id="A45161">
    <property type="entry name" value="A45161"/>
</dbReference>
<dbReference type="SMR" id="Q03238"/>
<dbReference type="FunCoup" id="Q03238">
    <property type="interactions" value="107"/>
</dbReference>
<dbReference type="IntAct" id="Q03238">
    <property type="interactions" value="1"/>
</dbReference>
<dbReference type="STRING" id="10116.ENSRNOP00000011086"/>
<dbReference type="MEROPS" id="S01.139"/>
<dbReference type="GlyCosmos" id="Q03238">
    <property type="glycosylation" value="2 sites, No reported glycans"/>
</dbReference>
<dbReference type="GlyGen" id="Q03238">
    <property type="glycosylation" value="2 sites"/>
</dbReference>
<dbReference type="PhosphoSitePlus" id="Q03238"/>
<dbReference type="PaxDb" id="10116-ENSRNOP00000011086"/>
<dbReference type="UCSC" id="RGD:620022">
    <property type="organism name" value="rat"/>
</dbReference>
<dbReference type="AGR" id="RGD:620022"/>
<dbReference type="RGD" id="620022">
    <property type="gene designation" value="Gzmm"/>
</dbReference>
<dbReference type="eggNOG" id="KOG3627">
    <property type="taxonomic scope" value="Eukaryota"/>
</dbReference>
<dbReference type="InParanoid" id="Q03238"/>
<dbReference type="PhylomeDB" id="Q03238"/>
<dbReference type="BRENDA" id="3.4.21.B2">
    <property type="organism ID" value="5301"/>
</dbReference>
<dbReference type="Proteomes" id="UP000002494">
    <property type="component" value="Unplaced"/>
</dbReference>
<dbReference type="GO" id="GO:0005615">
    <property type="term" value="C:extracellular space"/>
    <property type="evidence" value="ECO:0000318"/>
    <property type="project" value="GO_Central"/>
</dbReference>
<dbReference type="GO" id="GO:0004175">
    <property type="term" value="F:endopeptidase activity"/>
    <property type="evidence" value="ECO:0000266"/>
    <property type="project" value="RGD"/>
</dbReference>
<dbReference type="GO" id="GO:0004252">
    <property type="term" value="F:serine-type endopeptidase activity"/>
    <property type="evidence" value="ECO:0000266"/>
    <property type="project" value="RGD"/>
</dbReference>
<dbReference type="GO" id="GO:0008236">
    <property type="term" value="F:serine-type peptidase activity"/>
    <property type="evidence" value="ECO:0000314"/>
    <property type="project" value="RGD"/>
</dbReference>
<dbReference type="GO" id="GO:0006915">
    <property type="term" value="P:apoptotic process"/>
    <property type="evidence" value="ECO:0000266"/>
    <property type="project" value="RGD"/>
</dbReference>
<dbReference type="GO" id="GO:0045087">
    <property type="term" value="P:innate immune response"/>
    <property type="evidence" value="ECO:0007669"/>
    <property type="project" value="UniProtKB-KW"/>
</dbReference>
<dbReference type="GO" id="GO:0031640">
    <property type="term" value="P:killing of cells of another organism"/>
    <property type="evidence" value="ECO:0007669"/>
    <property type="project" value="UniProtKB-KW"/>
</dbReference>
<dbReference type="GO" id="GO:0051604">
    <property type="term" value="P:protein maturation"/>
    <property type="evidence" value="ECO:0000318"/>
    <property type="project" value="GO_Central"/>
</dbReference>
<dbReference type="GO" id="GO:0006508">
    <property type="term" value="P:proteolysis"/>
    <property type="evidence" value="ECO:0007669"/>
    <property type="project" value="UniProtKB-KW"/>
</dbReference>
<dbReference type="GO" id="GO:0001913">
    <property type="term" value="P:T cell mediated cytotoxicity"/>
    <property type="evidence" value="ECO:0000266"/>
    <property type="project" value="RGD"/>
</dbReference>
<dbReference type="CDD" id="cd00190">
    <property type="entry name" value="Tryp_SPc"/>
    <property type="match status" value="1"/>
</dbReference>
<dbReference type="FunFam" id="2.40.10.10:FF:000146">
    <property type="entry name" value="Serine protease 53"/>
    <property type="match status" value="1"/>
</dbReference>
<dbReference type="Gene3D" id="2.40.10.10">
    <property type="entry name" value="Trypsin-like serine proteases"/>
    <property type="match status" value="2"/>
</dbReference>
<dbReference type="InterPro" id="IPR009003">
    <property type="entry name" value="Peptidase_S1_PA"/>
</dbReference>
<dbReference type="InterPro" id="IPR043504">
    <property type="entry name" value="Peptidase_S1_PA_chymotrypsin"/>
</dbReference>
<dbReference type="InterPro" id="IPR001314">
    <property type="entry name" value="Peptidase_S1A"/>
</dbReference>
<dbReference type="InterPro" id="IPR001254">
    <property type="entry name" value="Trypsin_dom"/>
</dbReference>
<dbReference type="InterPro" id="IPR018114">
    <property type="entry name" value="TRYPSIN_HIS"/>
</dbReference>
<dbReference type="InterPro" id="IPR033116">
    <property type="entry name" value="TRYPSIN_SER"/>
</dbReference>
<dbReference type="PANTHER" id="PTHR24271:SF51">
    <property type="entry name" value="GRANZYME M"/>
    <property type="match status" value="1"/>
</dbReference>
<dbReference type="PANTHER" id="PTHR24271">
    <property type="entry name" value="KALLIKREIN-RELATED"/>
    <property type="match status" value="1"/>
</dbReference>
<dbReference type="Pfam" id="PF00089">
    <property type="entry name" value="Trypsin"/>
    <property type="match status" value="1"/>
</dbReference>
<dbReference type="PRINTS" id="PR00722">
    <property type="entry name" value="CHYMOTRYPSIN"/>
</dbReference>
<dbReference type="SMART" id="SM00020">
    <property type="entry name" value="Tryp_SPc"/>
    <property type="match status" value="1"/>
</dbReference>
<dbReference type="SUPFAM" id="SSF50494">
    <property type="entry name" value="Trypsin-like serine proteases"/>
    <property type="match status" value="1"/>
</dbReference>
<dbReference type="PROSITE" id="PS50240">
    <property type="entry name" value="TRYPSIN_DOM"/>
    <property type="match status" value="1"/>
</dbReference>
<dbReference type="PROSITE" id="PS00134">
    <property type="entry name" value="TRYPSIN_HIS"/>
    <property type="match status" value="1"/>
</dbReference>
<dbReference type="PROSITE" id="PS00135">
    <property type="entry name" value="TRYPSIN_SER"/>
    <property type="match status" value="1"/>
</dbReference>
<feature type="signal peptide" evidence="2">
    <location>
        <begin position="1" status="less than"/>
        <end status="unknown"/>
    </location>
</feature>
<feature type="propeptide" id="PRO_0000027423" description="Activation peptide" evidence="5">
    <location>
        <begin status="unknown"/>
        <end position="20"/>
    </location>
</feature>
<feature type="chain" id="PRO_0000027424" description="Granzyme M">
    <location>
        <begin position="21"/>
        <end position="258"/>
    </location>
</feature>
<feature type="domain" description="Peptidase S1" evidence="3">
    <location>
        <begin position="21"/>
        <end position="250"/>
    </location>
</feature>
<feature type="region of interest" description="Disordered" evidence="4">
    <location>
        <begin position="122"/>
        <end position="141"/>
    </location>
</feature>
<feature type="active site" description="Charge relay system" evidence="1">
    <location>
        <position position="61"/>
    </location>
</feature>
<feature type="active site" description="Charge relay system" evidence="1">
    <location>
        <position position="107"/>
    </location>
</feature>
<feature type="active site" description="Charge relay system" evidence="1">
    <location>
        <position position="204"/>
    </location>
</feature>
<feature type="glycosylation site" description="N-linked (GlcNAc...) asparagine" evidence="2">
    <location>
        <position position="174"/>
    </location>
</feature>
<feature type="glycosylation site" description="N-linked (GlcNAc...) asparagine" evidence="2">
    <location>
        <position position="225"/>
    </location>
</feature>
<feature type="disulfide bond" evidence="3">
    <location>
        <begin position="46"/>
        <end position="62"/>
    </location>
</feature>
<feature type="disulfide bond" evidence="3">
    <location>
        <begin position="142"/>
        <end position="210"/>
    </location>
</feature>
<feature type="disulfide bond" evidence="3">
    <location>
        <begin position="173"/>
        <end position="189"/>
    </location>
</feature>
<feature type="disulfide bond" evidence="3">
    <location>
        <begin position="200"/>
        <end position="226"/>
    </location>
</feature>
<feature type="non-terminal residue">
    <location>
        <position position="1"/>
    </location>
</feature>
<accession>Q03238</accession>
<sequence length="258" mass="28339">LLLLLALKTLWAVGNRFEAQIIGGREAVPHSRPYMVSLQNTKSHMCGGVLVHQKWVLTAAHCLSEPLQQLKLVFGLHSLHDPQDPGLTFYIKQAIKHPGYNLKYENDLALLKLDGRVKPSKNVKPLALPRKPRDKPAEGSRCSTAGWGITHQRGQLAKSLQELDLRLLDTRMCNNSRFWNGVLTDSMLCLKAGAKGQAPCKGDSGGPLVCGKGKVDGILSFSSKNCTDIFKPTVATAVAPYSSWIRKVIGRWSPQPLT</sequence>
<protein>
    <recommendedName>
        <fullName>Granzyme M</fullName>
        <ecNumber>3.4.21.-</ecNumber>
    </recommendedName>
    <alternativeName>
        <fullName>Met-ase</fullName>
    </alternativeName>
    <alternativeName>
        <fullName>Natural killer cell granular protease</fullName>
    </alternativeName>
    <alternativeName>
        <fullName>RNK-Met-1</fullName>
    </alternativeName>
</protein>
<reference key="1">
    <citation type="journal article" date="1992" name="J. Biol. Chem.">
        <title>Purification and cloning of a novel serine protease, RNK-Met-1, from the granules of a rat natural killer cell leukemia.</title>
        <authorList>
            <person name="Smyth M.J."/>
            <person name="Wiltrout T."/>
            <person name="Trapani J.A."/>
            <person name="Ottaway K.S."/>
            <person name="Sowder R."/>
            <person name="Henderson L.E."/>
            <person name="Kam C.-M."/>
            <person name="Powers J.C."/>
            <person name="Young H.A."/>
            <person name="Sayers T.J."/>
        </authorList>
    </citation>
    <scope>NUCLEOTIDE SEQUENCE [MRNA]</scope>
    <scope>PROTEIN SEQUENCE OF 21-44</scope>
</reference>
<organism>
    <name type="scientific">Rattus norvegicus</name>
    <name type="common">Rat</name>
    <dbReference type="NCBI Taxonomy" id="10116"/>
    <lineage>
        <taxon>Eukaryota</taxon>
        <taxon>Metazoa</taxon>
        <taxon>Chordata</taxon>
        <taxon>Craniata</taxon>
        <taxon>Vertebrata</taxon>
        <taxon>Euteleostomi</taxon>
        <taxon>Mammalia</taxon>
        <taxon>Eutheria</taxon>
        <taxon>Euarchontoglires</taxon>
        <taxon>Glires</taxon>
        <taxon>Rodentia</taxon>
        <taxon>Myomorpha</taxon>
        <taxon>Muroidea</taxon>
        <taxon>Muridae</taxon>
        <taxon>Murinae</taxon>
        <taxon>Rattus</taxon>
    </lineage>
</organism>
<keyword id="KW-0053">Apoptosis</keyword>
<keyword id="KW-0204">Cytolysis</keyword>
<keyword id="KW-0903">Direct protein sequencing</keyword>
<keyword id="KW-1015">Disulfide bond</keyword>
<keyword id="KW-0325">Glycoprotein</keyword>
<keyword id="KW-0378">Hydrolase</keyword>
<keyword id="KW-0391">Immunity</keyword>
<keyword id="KW-0399">Innate immunity</keyword>
<keyword id="KW-0645">Protease</keyword>
<keyword id="KW-1185">Reference proteome</keyword>
<keyword id="KW-0964">Secreted</keyword>
<keyword id="KW-0720">Serine protease</keyword>
<keyword id="KW-0732">Signal</keyword>
<keyword id="KW-0865">Zymogen</keyword>
<proteinExistence type="evidence at protein level"/>
<comment type="function">
    <text evidence="1">Cleaves peptide substrates after methionine, leucine, and norleucine. Physiological substrates include EZR, alpha-tubulins and the apoptosis inhibitor BIRC5/Survivin. Promotes caspase activation and subsequent apoptosis of target cells (By similarity).</text>
</comment>
<comment type="subcellular location">
    <subcellularLocation>
        <location>Secreted</location>
    </subcellularLocation>
    <subcellularLocation>
        <location>Cytoplasmic granule</location>
    </subcellularLocation>
    <text>Granules of large granular lymphocytes.</text>
</comment>
<comment type="similarity">
    <text evidence="3">Belongs to the peptidase S1 family. Granzyme subfamily.</text>
</comment>